<protein>
    <recommendedName>
        <fullName evidence="1">Uridylate kinase</fullName>
        <shortName evidence="1">UK</shortName>
        <ecNumber evidence="1">2.7.4.22</ecNumber>
    </recommendedName>
    <alternativeName>
        <fullName evidence="1">Uridine monophosphate kinase</fullName>
        <shortName evidence="1">UMP kinase</shortName>
        <shortName evidence="1">UMPK</shortName>
    </alternativeName>
</protein>
<name>PYRH_KORVE</name>
<feature type="chain" id="PRO_0000323774" description="Uridylate kinase">
    <location>
        <begin position="1"/>
        <end position="239"/>
    </location>
</feature>
<feature type="region of interest" description="Involved in allosteric activation by GTP" evidence="1">
    <location>
        <begin position="21"/>
        <end position="26"/>
    </location>
</feature>
<feature type="binding site" evidence="1">
    <location>
        <begin position="12"/>
        <end position="15"/>
    </location>
    <ligand>
        <name>ATP</name>
        <dbReference type="ChEBI" id="CHEBI:30616"/>
    </ligand>
</feature>
<feature type="binding site" evidence="1">
    <location>
        <position position="55"/>
    </location>
    <ligand>
        <name>UMP</name>
        <dbReference type="ChEBI" id="CHEBI:57865"/>
    </ligand>
</feature>
<feature type="binding site" evidence="1">
    <location>
        <position position="56"/>
    </location>
    <ligand>
        <name>ATP</name>
        <dbReference type="ChEBI" id="CHEBI:30616"/>
    </ligand>
</feature>
<feature type="binding site" evidence="1">
    <location>
        <position position="60"/>
    </location>
    <ligand>
        <name>ATP</name>
        <dbReference type="ChEBI" id="CHEBI:30616"/>
    </ligand>
</feature>
<feature type="binding site" evidence="1">
    <location>
        <position position="75"/>
    </location>
    <ligand>
        <name>UMP</name>
        <dbReference type="ChEBI" id="CHEBI:57865"/>
    </ligand>
</feature>
<feature type="binding site" evidence="1">
    <location>
        <begin position="136"/>
        <end position="143"/>
    </location>
    <ligand>
        <name>UMP</name>
        <dbReference type="ChEBI" id="CHEBI:57865"/>
    </ligand>
</feature>
<feature type="binding site" evidence="1">
    <location>
        <position position="163"/>
    </location>
    <ligand>
        <name>ATP</name>
        <dbReference type="ChEBI" id="CHEBI:30616"/>
    </ligand>
</feature>
<feature type="binding site" evidence="1">
    <location>
        <position position="169"/>
    </location>
    <ligand>
        <name>ATP</name>
        <dbReference type="ChEBI" id="CHEBI:30616"/>
    </ligand>
</feature>
<feature type="binding site" evidence="1">
    <location>
        <position position="172"/>
    </location>
    <ligand>
        <name>ATP</name>
        <dbReference type="ChEBI" id="CHEBI:30616"/>
    </ligand>
</feature>
<proteinExistence type="inferred from homology"/>
<accession>Q1IV36</accession>
<gene>
    <name evidence="1" type="primary">pyrH</name>
    <name type="ordered locus">Acid345_0259</name>
</gene>
<reference key="1">
    <citation type="journal article" date="2009" name="Appl. Environ. Microbiol.">
        <title>Three genomes from the phylum Acidobacteria provide insight into the lifestyles of these microorganisms in soils.</title>
        <authorList>
            <person name="Ward N.L."/>
            <person name="Challacombe J.F."/>
            <person name="Janssen P.H."/>
            <person name="Henrissat B."/>
            <person name="Coutinho P.M."/>
            <person name="Wu M."/>
            <person name="Xie G."/>
            <person name="Haft D.H."/>
            <person name="Sait M."/>
            <person name="Badger J."/>
            <person name="Barabote R.D."/>
            <person name="Bradley B."/>
            <person name="Brettin T.S."/>
            <person name="Brinkac L.M."/>
            <person name="Bruce D."/>
            <person name="Creasy T."/>
            <person name="Daugherty S.C."/>
            <person name="Davidsen T.M."/>
            <person name="DeBoy R.T."/>
            <person name="Detter J.C."/>
            <person name="Dodson R.J."/>
            <person name="Durkin A.S."/>
            <person name="Ganapathy A."/>
            <person name="Gwinn-Giglio M."/>
            <person name="Han C.S."/>
            <person name="Khouri H."/>
            <person name="Kiss H."/>
            <person name="Kothari S.P."/>
            <person name="Madupu R."/>
            <person name="Nelson K.E."/>
            <person name="Nelson W.C."/>
            <person name="Paulsen I."/>
            <person name="Penn K."/>
            <person name="Ren Q."/>
            <person name="Rosovitz M.J."/>
            <person name="Selengut J.D."/>
            <person name="Shrivastava S."/>
            <person name="Sullivan S.A."/>
            <person name="Tapia R."/>
            <person name="Thompson L.S."/>
            <person name="Watkins K.L."/>
            <person name="Yang Q."/>
            <person name="Yu C."/>
            <person name="Zafar N."/>
            <person name="Zhou L."/>
            <person name="Kuske C.R."/>
        </authorList>
    </citation>
    <scope>NUCLEOTIDE SEQUENCE [LARGE SCALE GENOMIC DNA]</scope>
    <source>
        <strain>Ellin345</strain>
    </source>
</reference>
<keyword id="KW-0021">Allosteric enzyme</keyword>
<keyword id="KW-0067">ATP-binding</keyword>
<keyword id="KW-0963">Cytoplasm</keyword>
<keyword id="KW-0418">Kinase</keyword>
<keyword id="KW-0547">Nucleotide-binding</keyword>
<keyword id="KW-0665">Pyrimidine biosynthesis</keyword>
<keyword id="KW-1185">Reference proteome</keyword>
<keyword id="KW-0808">Transferase</keyword>
<comment type="function">
    <text evidence="1">Catalyzes the reversible phosphorylation of UMP to UDP.</text>
</comment>
<comment type="catalytic activity">
    <reaction evidence="1">
        <text>UMP + ATP = UDP + ADP</text>
        <dbReference type="Rhea" id="RHEA:24400"/>
        <dbReference type="ChEBI" id="CHEBI:30616"/>
        <dbReference type="ChEBI" id="CHEBI:57865"/>
        <dbReference type="ChEBI" id="CHEBI:58223"/>
        <dbReference type="ChEBI" id="CHEBI:456216"/>
        <dbReference type="EC" id="2.7.4.22"/>
    </reaction>
</comment>
<comment type="activity regulation">
    <text evidence="1">Allosterically activated by GTP. Inhibited by UTP.</text>
</comment>
<comment type="pathway">
    <text evidence="1">Pyrimidine metabolism; CTP biosynthesis via de novo pathway; UDP from UMP (UMPK route): step 1/1.</text>
</comment>
<comment type="subunit">
    <text evidence="1">Homohexamer.</text>
</comment>
<comment type="subcellular location">
    <subcellularLocation>
        <location evidence="1">Cytoplasm</location>
    </subcellularLocation>
</comment>
<comment type="similarity">
    <text evidence="1">Belongs to the UMP kinase family.</text>
</comment>
<dbReference type="EC" id="2.7.4.22" evidence="1"/>
<dbReference type="EMBL" id="CP000360">
    <property type="protein sequence ID" value="ABF39264.1"/>
    <property type="molecule type" value="Genomic_DNA"/>
</dbReference>
<dbReference type="RefSeq" id="WP_011521066.1">
    <property type="nucleotide sequence ID" value="NC_008009.1"/>
</dbReference>
<dbReference type="SMR" id="Q1IV36"/>
<dbReference type="STRING" id="204669.Acid345_0259"/>
<dbReference type="EnsemblBacteria" id="ABF39264">
    <property type="protein sequence ID" value="ABF39264"/>
    <property type="gene ID" value="Acid345_0259"/>
</dbReference>
<dbReference type="KEGG" id="aba:Acid345_0259"/>
<dbReference type="eggNOG" id="COG0528">
    <property type="taxonomic scope" value="Bacteria"/>
</dbReference>
<dbReference type="HOGENOM" id="CLU_033861_0_0_0"/>
<dbReference type="OrthoDB" id="9807458at2"/>
<dbReference type="UniPathway" id="UPA00159">
    <property type="reaction ID" value="UER00275"/>
</dbReference>
<dbReference type="Proteomes" id="UP000002432">
    <property type="component" value="Chromosome"/>
</dbReference>
<dbReference type="GO" id="GO:0005737">
    <property type="term" value="C:cytoplasm"/>
    <property type="evidence" value="ECO:0007669"/>
    <property type="project" value="UniProtKB-SubCell"/>
</dbReference>
<dbReference type="GO" id="GO:0005524">
    <property type="term" value="F:ATP binding"/>
    <property type="evidence" value="ECO:0007669"/>
    <property type="project" value="UniProtKB-KW"/>
</dbReference>
<dbReference type="GO" id="GO:0033862">
    <property type="term" value="F:UMP kinase activity"/>
    <property type="evidence" value="ECO:0007669"/>
    <property type="project" value="UniProtKB-EC"/>
</dbReference>
<dbReference type="GO" id="GO:0044210">
    <property type="term" value="P:'de novo' CTP biosynthetic process"/>
    <property type="evidence" value="ECO:0007669"/>
    <property type="project" value="UniProtKB-UniRule"/>
</dbReference>
<dbReference type="GO" id="GO:0006225">
    <property type="term" value="P:UDP biosynthetic process"/>
    <property type="evidence" value="ECO:0007669"/>
    <property type="project" value="TreeGrafter"/>
</dbReference>
<dbReference type="CDD" id="cd04254">
    <property type="entry name" value="AAK_UMPK-PyrH-Ec"/>
    <property type="match status" value="1"/>
</dbReference>
<dbReference type="FunFam" id="3.40.1160.10:FF:000001">
    <property type="entry name" value="Uridylate kinase"/>
    <property type="match status" value="1"/>
</dbReference>
<dbReference type="Gene3D" id="3.40.1160.10">
    <property type="entry name" value="Acetylglutamate kinase-like"/>
    <property type="match status" value="1"/>
</dbReference>
<dbReference type="HAMAP" id="MF_01220_B">
    <property type="entry name" value="PyrH_B"/>
    <property type="match status" value="1"/>
</dbReference>
<dbReference type="InterPro" id="IPR036393">
    <property type="entry name" value="AceGlu_kinase-like_sf"/>
</dbReference>
<dbReference type="InterPro" id="IPR001048">
    <property type="entry name" value="Asp/Glu/Uridylate_kinase"/>
</dbReference>
<dbReference type="InterPro" id="IPR011817">
    <property type="entry name" value="Uridylate_kinase"/>
</dbReference>
<dbReference type="InterPro" id="IPR015963">
    <property type="entry name" value="Uridylate_kinase_bac"/>
</dbReference>
<dbReference type="NCBIfam" id="TIGR02075">
    <property type="entry name" value="pyrH_bact"/>
    <property type="match status" value="1"/>
</dbReference>
<dbReference type="PANTHER" id="PTHR42833">
    <property type="entry name" value="URIDYLATE KINASE"/>
    <property type="match status" value="1"/>
</dbReference>
<dbReference type="PANTHER" id="PTHR42833:SF4">
    <property type="entry name" value="URIDYLATE KINASE PUMPKIN, CHLOROPLASTIC"/>
    <property type="match status" value="1"/>
</dbReference>
<dbReference type="Pfam" id="PF00696">
    <property type="entry name" value="AA_kinase"/>
    <property type="match status" value="1"/>
</dbReference>
<dbReference type="PIRSF" id="PIRSF005650">
    <property type="entry name" value="Uridylate_kin"/>
    <property type="match status" value="1"/>
</dbReference>
<dbReference type="SUPFAM" id="SSF53633">
    <property type="entry name" value="Carbamate kinase-like"/>
    <property type="match status" value="1"/>
</dbReference>
<organism>
    <name type="scientific">Koribacter versatilis (strain Ellin345)</name>
    <dbReference type="NCBI Taxonomy" id="204669"/>
    <lineage>
        <taxon>Bacteria</taxon>
        <taxon>Pseudomonadati</taxon>
        <taxon>Acidobacteriota</taxon>
        <taxon>Terriglobia</taxon>
        <taxon>Terriglobales</taxon>
        <taxon>Candidatus Korobacteraceae</taxon>
        <taxon>Candidatus Korobacter</taxon>
    </lineage>
</organism>
<sequence length="239" mass="26005">MSEPKYKRILLKLSGEALAQGEQGFGVDPTRVHEIAAEIAEVHRLGVDIGVVVGGGNFFRGVAEQAKDMDRVSADHMGMLATVMNSLAVQDALEKQNVQCRVMSAIEIFQVAEPFIRRRAMRHLEKGRVVIFAAGTGNPYFSTDTAASLRAAEIKADVIMKATKVDGIYDADPHKVADATMFAQITYMDVLKKGLRVMDATAISLCQENRLPIVVFNLNERGNIQRVVMGEAVGSLVSA</sequence>
<evidence type="ECO:0000255" key="1">
    <source>
        <dbReference type="HAMAP-Rule" id="MF_01220"/>
    </source>
</evidence>